<gene>
    <name evidence="1" type="primary">tpl</name>
    <name type="ordered locus">CTC_00818</name>
</gene>
<accession>Q897C2</accession>
<comment type="catalytic activity">
    <reaction evidence="1">
        <text>L-tyrosine + H2O = phenol + pyruvate + NH4(+)</text>
        <dbReference type="Rhea" id="RHEA:21704"/>
        <dbReference type="ChEBI" id="CHEBI:15361"/>
        <dbReference type="ChEBI" id="CHEBI:15377"/>
        <dbReference type="ChEBI" id="CHEBI:15882"/>
        <dbReference type="ChEBI" id="CHEBI:28938"/>
        <dbReference type="ChEBI" id="CHEBI:58315"/>
        <dbReference type="EC" id="4.1.99.2"/>
    </reaction>
</comment>
<comment type="cofactor">
    <cofactor evidence="1">
        <name>pyridoxal 5'-phosphate</name>
        <dbReference type="ChEBI" id="CHEBI:597326"/>
    </cofactor>
</comment>
<comment type="subunit">
    <text evidence="1">Homotetramer.</text>
</comment>
<comment type="similarity">
    <text evidence="1">Belongs to the beta-eliminating lyase family.</text>
</comment>
<comment type="sequence caution" evidence="2">
    <conflict type="erroneous initiation">
        <sequence resource="EMBL-CDS" id="AAO35416"/>
    </conflict>
</comment>
<keyword id="KW-0456">Lyase</keyword>
<keyword id="KW-0663">Pyridoxal phosphate</keyword>
<keyword id="KW-1185">Reference proteome</keyword>
<name>TPL_CLOTE</name>
<dbReference type="EC" id="4.1.99.2" evidence="1"/>
<dbReference type="EMBL" id="AE015927">
    <property type="protein sequence ID" value="AAO35416.1"/>
    <property type="status" value="ALT_INIT"/>
    <property type="molecule type" value="Genomic_DNA"/>
</dbReference>
<dbReference type="SMR" id="Q897C2"/>
<dbReference type="STRING" id="212717.CTC_00818"/>
<dbReference type="KEGG" id="ctc:CTC_00818"/>
<dbReference type="HOGENOM" id="CLU_047223_0_0_9"/>
<dbReference type="OrthoDB" id="9764079at2"/>
<dbReference type="Proteomes" id="UP000001412">
    <property type="component" value="Chromosome"/>
</dbReference>
<dbReference type="GO" id="GO:0050371">
    <property type="term" value="F:tyrosine phenol-lyase activity"/>
    <property type="evidence" value="ECO:0007669"/>
    <property type="project" value="UniProtKB-UniRule"/>
</dbReference>
<dbReference type="GO" id="GO:0006570">
    <property type="term" value="P:tyrosine metabolic process"/>
    <property type="evidence" value="ECO:0007669"/>
    <property type="project" value="InterPro"/>
</dbReference>
<dbReference type="CDD" id="cd00617">
    <property type="entry name" value="Tnase_like"/>
    <property type="match status" value="1"/>
</dbReference>
<dbReference type="Gene3D" id="3.90.1150.10">
    <property type="entry name" value="Aspartate Aminotransferase, domain 1"/>
    <property type="match status" value="1"/>
</dbReference>
<dbReference type="Gene3D" id="3.40.640.10">
    <property type="entry name" value="Type I PLP-dependent aspartate aminotransferase-like (Major domain)"/>
    <property type="match status" value="1"/>
</dbReference>
<dbReference type="HAMAP" id="MF_00543">
    <property type="entry name" value="Tyr_phenol_lyase"/>
    <property type="match status" value="1"/>
</dbReference>
<dbReference type="InterPro" id="IPR001597">
    <property type="entry name" value="ArAA_b-elim_lyase/Thr_aldolase"/>
</dbReference>
<dbReference type="InterPro" id="IPR011166">
    <property type="entry name" value="Beta-eliminating_lyase"/>
</dbReference>
<dbReference type="InterPro" id="IPR015424">
    <property type="entry name" value="PyrdxlP-dep_Trfase"/>
</dbReference>
<dbReference type="InterPro" id="IPR015421">
    <property type="entry name" value="PyrdxlP-dep_Trfase_major"/>
</dbReference>
<dbReference type="InterPro" id="IPR015422">
    <property type="entry name" value="PyrdxlP-dep_Trfase_small"/>
</dbReference>
<dbReference type="InterPro" id="IPR018176">
    <property type="entry name" value="Tryptophanase_CS"/>
</dbReference>
<dbReference type="InterPro" id="IPR013441">
    <property type="entry name" value="Tyr_phenol_ly"/>
</dbReference>
<dbReference type="NCBIfam" id="NF009709">
    <property type="entry name" value="PRK13238.1"/>
    <property type="match status" value="1"/>
</dbReference>
<dbReference type="NCBIfam" id="TIGR02618">
    <property type="entry name" value="tyr_phenol_ly"/>
    <property type="match status" value="1"/>
</dbReference>
<dbReference type="PANTHER" id="PTHR32325">
    <property type="entry name" value="BETA-ELIMINATING LYASE-LIKE PROTEIN-RELATED"/>
    <property type="match status" value="1"/>
</dbReference>
<dbReference type="PANTHER" id="PTHR32325:SF4">
    <property type="entry name" value="TRYPTOPHANASE"/>
    <property type="match status" value="1"/>
</dbReference>
<dbReference type="Pfam" id="PF01212">
    <property type="entry name" value="Beta_elim_lyase"/>
    <property type="match status" value="1"/>
</dbReference>
<dbReference type="PIRSF" id="PIRSF001386">
    <property type="entry name" value="Trpase"/>
    <property type="match status" value="1"/>
</dbReference>
<dbReference type="SUPFAM" id="SSF53383">
    <property type="entry name" value="PLP-dependent transferases"/>
    <property type="match status" value="1"/>
</dbReference>
<dbReference type="PROSITE" id="PS00853">
    <property type="entry name" value="BETA_ELIM_LYASE"/>
    <property type="match status" value="1"/>
</dbReference>
<organism>
    <name type="scientific">Clostridium tetani (strain Massachusetts / E88)</name>
    <dbReference type="NCBI Taxonomy" id="212717"/>
    <lineage>
        <taxon>Bacteria</taxon>
        <taxon>Bacillati</taxon>
        <taxon>Bacillota</taxon>
        <taxon>Clostridia</taxon>
        <taxon>Eubacteriales</taxon>
        <taxon>Clostridiaceae</taxon>
        <taxon>Clostridium</taxon>
    </lineage>
</organism>
<protein>
    <recommendedName>
        <fullName evidence="1">Tyrosine phenol-lyase</fullName>
        <ecNumber evidence="1">4.1.99.2</ecNumber>
    </recommendedName>
    <alternativeName>
        <fullName evidence="1">Beta-tyrosinase</fullName>
    </alternativeName>
</protein>
<sequence>MDLSKYPAEPFKIKSVEPVKMISREEREIAMKEAGYNTFNLRSEDVYIDLLTDSGTNAMSDAQWAGMMIGDEAYAGSKNWLFLESTIKELFGFKHVVPTHQGRGAENLLSSIAIKPGQYVAGNMYFTTTRYHQEKNGGIFVDIIRDEAHDASIDIPFKGNIDVNKLEKLIEEKGAENIAYVCLAVTVNLAGGQPVSMANMRAVRELTAKHGIKVFYDATRCVENAYFIKEQEEGYADVSIKDIVHEMFSYSDGATMSGKKDGIVNIGGFLAINDEELFGKAKEIVVVYEGMPSYGGMTGRDMQAIAIGFREAMQYEYIEHRIRQVRYLGDRLKEAGVPIVEPVGGHAVFLDARRFCPHLDQEQFPAQSLAASLYIDSGVRSMERGIVSAGRDVNTGENHKPKLETVRLTIPRRVYTYKHMDVVAESVIHLYKHKEDIRPLKFTYEPAQLRFFTAKFDYAD</sequence>
<proteinExistence type="inferred from homology"/>
<reference key="1">
    <citation type="journal article" date="2003" name="Proc. Natl. Acad. Sci. U.S.A.">
        <title>The genome sequence of Clostridium tetani, the causative agent of tetanus disease.</title>
        <authorList>
            <person name="Brueggemann H."/>
            <person name="Baeumer S."/>
            <person name="Fricke W.F."/>
            <person name="Wiezer A."/>
            <person name="Liesegang H."/>
            <person name="Decker I."/>
            <person name="Herzberg C."/>
            <person name="Martinez-Arias R."/>
            <person name="Merkl R."/>
            <person name="Henne A."/>
            <person name="Gottschalk G."/>
        </authorList>
    </citation>
    <scope>NUCLEOTIDE SEQUENCE [LARGE SCALE GENOMIC DNA]</scope>
    <source>
        <strain>Massachusetts / E88</strain>
    </source>
</reference>
<feature type="chain" id="PRO_0000195632" description="Tyrosine phenol-lyase">
    <location>
        <begin position="1"/>
        <end position="460"/>
    </location>
</feature>
<feature type="modified residue" description="N6-(pyridoxal phosphate)lysine" evidence="1">
    <location>
        <position position="260"/>
    </location>
</feature>
<evidence type="ECO:0000255" key="1">
    <source>
        <dbReference type="HAMAP-Rule" id="MF_00543"/>
    </source>
</evidence>
<evidence type="ECO:0000305" key="2"/>